<sequence>MVSLLRCPSSKPYSSLICSLTLGAVVALSGVAYAEETKPAETVPVVTPPKVISQPATKNQVRFTKTGAFDSDTVVKIAKRLAAKPYVALKDPLPAGLAKLSYDEYRDIRFNPTASIWRDQGVPFQMQMFHRGFYFQDLIEIAIVEGQNATHLAYEPKYFTAGEVITQALPNDDIGYSGFRIHNQLNTNGVFDELMVFQGASYFRALGKGNAYGLSSRGLALKTADAEGEEFPIFRAFWVERPYNDSNLIVVHALLDSPSVAGAYTFSVRPGDNTLIDVEATLFPRVELSKVGLAPSTSMFLHSLNGRHDTDDFRPEVHDSDGLLMLNGRGEHLWRPLANPRQLQVSAFSDNSPQGFGLIQRERDYASYQDLEAHYERRPSLWIEPVGNWGQGSVVLTEIPTESEIHDNIVSYWKPRQPIPAGSEFHFAYRMSWGEEPAAKVGAVHVSRSASGRADIAKATPRRLFVVDYQIEGPMTDEMPVAKVEASGGVVTNVVIARNAAKNGYRLAFELEPEDKELIELRAELKFPTPRQVETWLYRWTL</sequence>
<organism>
    <name type="scientific">Shewanella baltica (strain OS195)</name>
    <dbReference type="NCBI Taxonomy" id="399599"/>
    <lineage>
        <taxon>Bacteria</taxon>
        <taxon>Pseudomonadati</taxon>
        <taxon>Pseudomonadota</taxon>
        <taxon>Gammaproteobacteria</taxon>
        <taxon>Alteromonadales</taxon>
        <taxon>Shewanellaceae</taxon>
        <taxon>Shewanella</taxon>
    </lineage>
</organism>
<accession>A9KZ12</accession>
<name>OPGG_SHEB9</name>
<reference key="1">
    <citation type="submission" date="2007-11" db="EMBL/GenBank/DDBJ databases">
        <title>Complete sequence of chromosome of Shewanella baltica OS195.</title>
        <authorList>
            <consortium name="US DOE Joint Genome Institute"/>
            <person name="Copeland A."/>
            <person name="Lucas S."/>
            <person name="Lapidus A."/>
            <person name="Barry K."/>
            <person name="Glavina del Rio T."/>
            <person name="Dalin E."/>
            <person name="Tice H."/>
            <person name="Pitluck S."/>
            <person name="Chain P."/>
            <person name="Malfatti S."/>
            <person name="Shin M."/>
            <person name="Vergez L."/>
            <person name="Schmutz J."/>
            <person name="Larimer F."/>
            <person name="Land M."/>
            <person name="Hauser L."/>
            <person name="Kyrpides N."/>
            <person name="Kim E."/>
            <person name="Brettar I."/>
            <person name="Rodrigues J."/>
            <person name="Konstantinidis K."/>
            <person name="Klappenbach J."/>
            <person name="Hofle M."/>
            <person name="Tiedje J."/>
            <person name="Richardson P."/>
        </authorList>
    </citation>
    <scope>NUCLEOTIDE SEQUENCE [LARGE SCALE GENOMIC DNA]</scope>
    <source>
        <strain>OS195</strain>
    </source>
</reference>
<evidence type="ECO:0000255" key="1">
    <source>
        <dbReference type="HAMAP-Rule" id="MF_01069"/>
    </source>
</evidence>
<comment type="function">
    <text evidence="1">Involved in the biosynthesis of osmoregulated periplasmic glucans (OPGs).</text>
</comment>
<comment type="pathway">
    <text evidence="1">Glycan metabolism; osmoregulated periplasmic glucan (OPG) biosynthesis.</text>
</comment>
<comment type="subcellular location">
    <subcellularLocation>
        <location evidence="1">Periplasm</location>
    </subcellularLocation>
</comment>
<comment type="similarity">
    <text evidence="1">Belongs to the OpgD/OpgG family.</text>
</comment>
<gene>
    <name evidence="1" type="primary">opgG</name>
    <name type="ordered locus">Sbal195_1929</name>
</gene>
<protein>
    <recommendedName>
        <fullName evidence="1">Glucans biosynthesis protein G</fullName>
    </recommendedName>
</protein>
<keyword id="KW-0574">Periplasm</keyword>
<keyword id="KW-0732">Signal</keyword>
<dbReference type="EMBL" id="CP000891">
    <property type="protein sequence ID" value="ABX49100.1"/>
    <property type="molecule type" value="Genomic_DNA"/>
</dbReference>
<dbReference type="RefSeq" id="WP_006081391.1">
    <property type="nucleotide sequence ID" value="NC_009997.1"/>
</dbReference>
<dbReference type="SMR" id="A9KZ12"/>
<dbReference type="KEGG" id="sbn:Sbal195_1929"/>
<dbReference type="HOGENOM" id="CLU_023403_2_0_6"/>
<dbReference type="UniPathway" id="UPA00637"/>
<dbReference type="Proteomes" id="UP000000770">
    <property type="component" value="Chromosome"/>
</dbReference>
<dbReference type="GO" id="GO:0030288">
    <property type="term" value="C:outer membrane-bounded periplasmic space"/>
    <property type="evidence" value="ECO:0007669"/>
    <property type="project" value="TreeGrafter"/>
</dbReference>
<dbReference type="GO" id="GO:0030246">
    <property type="term" value="F:carbohydrate binding"/>
    <property type="evidence" value="ECO:0007669"/>
    <property type="project" value="InterPro"/>
</dbReference>
<dbReference type="GO" id="GO:0003824">
    <property type="term" value="F:catalytic activity"/>
    <property type="evidence" value="ECO:0007669"/>
    <property type="project" value="InterPro"/>
</dbReference>
<dbReference type="GO" id="GO:0051274">
    <property type="term" value="P:beta-glucan biosynthetic process"/>
    <property type="evidence" value="ECO:0007669"/>
    <property type="project" value="TreeGrafter"/>
</dbReference>
<dbReference type="FunFam" id="2.60.40.10:FF:001915">
    <property type="entry name" value="Glucans biosynthesis protein G"/>
    <property type="match status" value="1"/>
</dbReference>
<dbReference type="FunFam" id="2.70.98.10:FF:000001">
    <property type="entry name" value="Glucans biosynthesis protein G"/>
    <property type="match status" value="1"/>
</dbReference>
<dbReference type="Gene3D" id="2.70.98.10">
    <property type="match status" value="1"/>
</dbReference>
<dbReference type="Gene3D" id="2.60.40.10">
    <property type="entry name" value="Immunoglobulins"/>
    <property type="match status" value="1"/>
</dbReference>
<dbReference type="HAMAP" id="MF_01069">
    <property type="entry name" value="MdoG_OpgG"/>
    <property type="match status" value="1"/>
</dbReference>
<dbReference type="InterPro" id="IPR011013">
    <property type="entry name" value="Gal_mutarotase_sf_dom"/>
</dbReference>
<dbReference type="InterPro" id="IPR014718">
    <property type="entry name" value="GH-type_carb-bd"/>
</dbReference>
<dbReference type="InterPro" id="IPR014438">
    <property type="entry name" value="Glucan_biosyn_MdoG/MdoD"/>
</dbReference>
<dbReference type="InterPro" id="IPR007444">
    <property type="entry name" value="Glucan_biosyn_MdoG_C"/>
</dbReference>
<dbReference type="InterPro" id="IPR013783">
    <property type="entry name" value="Ig-like_fold"/>
</dbReference>
<dbReference type="InterPro" id="IPR014756">
    <property type="entry name" value="Ig_E-set"/>
</dbReference>
<dbReference type="InterPro" id="IPR023704">
    <property type="entry name" value="MdoG_OpgG"/>
</dbReference>
<dbReference type="PANTHER" id="PTHR30504">
    <property type="entry name" value="GLUCANS BIOSYNTHESIS PROTEIN"/>
    <property type="match status" value="1"/>
</dbReference>
<dbReference type="PANTHER" id="PTHR30504:SF2">
    <property type="entry name" value="GLUCANS BIOSYNTHESIS PROTEIN G"/>
    <property type="match status" value="1"/>
</dbReference>
<dbReference type="Pfam" id="PF04349">
    <property type="entry name" value="MdoG"/>
    <property type="match status" value="1"/>
</dbReference>
<dbReference type="PIRSF" id="PIRSF006281">
    <property type="entry name" value="MdoG"/>
    <property type="match status" value="1"/>
</dbReference>
<dbReference type="SUPFAM" id="SSF81296">
    <property type="entry name" value="E set domains"/>
    <property type="match status" value="1"/>
</dbReference>
<dbReference type="SUPFAM" id="SSF74650">
    <property type="entry name" value="Galactose mutarotase-like"/>
    <property type="match status" value="1"/>
</dbReference>
<proteinExistence type="inferred from homology"/>
<feature type="signal peptide" evidence="1">
    <location>
        <begin position="1"/>
        <end position="34"/>
    </location>
</feature>
<feature type="chain" id="PRO_5000296906" description="Glucans biosynthesis protein G">
    <location>
        <begin position="35"/>
        <end position="542"/>
    </location>
</feature>